<evidence type="ECO:0000255" key="1">
    <source>
        <dbReference type="HAMAP-Rule" id="MF_01718"/>
    </source>
</evidence>
<comment type="function">
    <text evidence="1">Part of the ABC transporter complex HmuTUV involved in hemin import. Responsible for energy coupling to the transport system.</text>
</comment>
<comment type="subunit">
    <text evidence="1">The complex is composed of two ATP-binding proteins (HmuV), two transmembrane proteins (HmuU) and a solute-binding protein (HmuT).</text>
</comment>
<comment type="subcellular location">
    <subcellularLocation>
        <location evidence="1">Cell inner membrane</location>
        <topology evidence="1">Peripheral membrane protein</topology>
    </subcellularLocation>
</comment>
<comment type="similarity">
    <text evidence="1">Belongs to the ABC transporter superfamily. Heme (hemin) importer (TC 3.A.1.14.5) family.</text>
</comment>
<gene>
    <name evidence="1" type="primary">hmuV</name>
    <name type="ordered locus">VV2_1609</name>
</gene>
<organism>
    <name type="scientific">Vibrio vulnificus (strain CMCP6)</name>
    <dbReference type="NCBI Taxonomy" id="216895"/>
    <lineage>
        <taxon>Bacteria</taxon>
        <taxon>Pseudomonadati</taxon>
        <taxon>Pseudomonadota</taxon>
        <taxon>Gammaproteobacteria</taxon>
        <taxon>Vibrionales</taxon>
        <taxon>Vibrionaceae</taxon>
        <taxon>Vibrio</taxon>
    </lineage>
</organism>
<accession>Q8D3S8</accession>
<protein>
    <recommendedName>
        <fullName evidence="1">Hemin import ATP-binding protein HmuV</fullName>
        <ecNumber evidence="1">7.6.2.-</ecNumber>
    </recommendedName>
</protein>
<proteinExistence type="inferred from homology"/>
<name>HMUV_VIBVU</name>
<reference key="1">
    <citation type="submission" date="2002-12" db="EMBL/GenBank/DDBJ databases">
        <title>Complete genome sequence of Vibrio vulnificus CMCP6.</title>
        <authorList>
            <person name="Rhee J.H."/>
            <person name="Kim S.Y."/>
            <person name="Chung S.S."/>
            <person name="Kim J.J."/>
            <person name="Moon Y.H."/>
            <person name="Jeong H."/>
            <person name="Choy H.E."/>
        </authorList>
    </citation>
    <scope>NUCLEOTIDE SEQUENCE [LARGE SCALE GENOMIC DNA]</scope>
    <source>
        <strain>CMCP6</strain>
    </source>
</reference>
<dbReference type="EC" id="7.6.2.-" evidence="1"/>
<dbReference type="EMBL" id="AE016796">
    <property type="protein sequence ID" value="AAO08468.1"/>
    <property type="molecule type" value="Genomic_DNA"/>
</dbReference>
<dbReference type="RefSeq" id="WP_011082452.1">
    <property type="nucleotide sequence ID" value="NC_004460.2"/>
</dbReference>
<dbReference type="SMR" id="Q8D3S8"/>
<dbReference type="KEGG" id="vvu:VV2_1609"/>
<dbReference type="HOGENOM" id="CLU_000604_1_11_6"/>
<dbReference type="Proteomes" id="UP000002275">
    <property type="component" value="Chromosome 2"/>
</dbReference>
<dbReference type="GO" id="GO:0005886">
    <property type="term" value="C:plasma membrane"/>
    <property type="evidence" value="ECO:0007669"/>
    <property type="project" value="UniProtKB-SubCell"/>
</dbReference>
<dbReference type="GO" id="GO:0005524">
    <property type="term" value="F:ATP binding"/>
    <property type="evidence" value="ECO:0007669"/>
    <property type="project" value="UniProtKB-KW"/>
</dbReference>
<dbReference type="GO" id="GO:0016887">
    <property type="term" value="F:ATP hydrolysis activity"/>
    <property type="evidence" value="ECO:0007669"/>
    <property type="project" value="InterPro"/>
</dbReference>
<dbReference type="CDD" id="cd03214">
    <property type="entry name" value="ABC_Iron-Siderophores_B12_Hemin"/>
    <property type="match status" value="1"/>
</dbReference>
<dbReference type="Gene3D" id="3.40.50.300">
    <property type="entry name" value="P-loop containing nucleotide triphosphate hydrolases"/>
    <property type="match status" value="1"/>
</dbReference>
<dbReference type="InterPro" id="IPR003593">
    <property type="entry name" value="AAA+_ATPase"/>
</dbReference>
<dbReference type="InterPro" id="IPR003439">
    <property type="entry name" value="ABC_transporter-like_ATP-bd"/>
</dbReference>
<dbReference type="InterPro" id="IPR027417">
    <property type="entry name" value="P-loop_NTPase"/>
</dbReference>
<dbReference type="NCBIfam" id="NF010068">
    <property type="entry name" value="PRK13548.1"/>
    <property type="match status" value="1"/>
</dbReference>
<dbReference type="PANTHER" id="PTHR42794">
    <property type="entry name" value="HEMIN IMPORT ATP-BINDING PROTEIN HMUV"/>
    <property type="match status" value="1"/>
</dbReference>
<dbReference type="PANTHER" id="PTHR42794:SF1">
    <property type="entry name" value="HEMIN IMPORT ATP-BINDING PROTEIN HMUV"/>
    <property type="match status" value="1"/>
</dbReference>
<dbReference type="Pfam" id="PF00005">
    <property type="entry name" value="ABC_tran"/>
    <property type="match status" value="1"/>
</dbReference>
<dbReference type="SMART" id="SM00382">
    <property type="entry name" value="AAA"/>
    <property type="match status" value="1"/>
</dbReference>
<dbReference type="SUPFAM" id="SSF52540">
    <property type="entry name" value="P-loop containing nucleoside triphosphate hydrolases"/>
    <property type="match status" value="1"/>
</dbReference>
<dbReference type="PROSITE" id="PS50893">
    <property type="entry name" value="ABC_TRANSPORTER_2"/>
    <property type="match status" value="1"/>
</dbReference>
<dbReference type="PROSITE" id="PS51261">
    <property type="entry name" value="HMUV"/>
    <property type="match status" value="1"/>
</dbReference>
<feature type="chain" id="PRO_0000269638" description="Hemin import ATP-binding protein HmuV">
    <location>
        <begin position="1"/>
        <end position="261"/>
    </location>
</feature>
<feature type="domain" description="ABC transporter" evidence="1">
    <location>
        <begin position="7"/>
        <end position="243"/>
    </location>
</feature>
<feature type="binding site" evidence="1">
    <location>
        <begin position="39"/>
        <end position="46"/>
    </location>
    <ligand>
        <name>ATP</name>
        <dbReference type="ChEBI" id="CHEBI:30616"/>
    </ligand>
</feature>
<sequence length="261" mass="28287">MKKPVVLRGQNLSLQFASRQVLKQIDVAFCAGEVVALLGPNGAGKSSLLKLLSGEITSSQSIEYFGKAAKSWRSAALSRHLGLLPQSSSLTFPFLAREVVELGAIPLALSQAEVKTIAEKYMAITDVVHLADSLYPALSGGEKQRLHFARVLTQLDQSGDKKILMLDEPTSALDLAHQHNTLRVAKQFAKEQNACVIVVLHDLNLAAQYADRMVILHRGEIVVDACPEEALTPEIIDAVYGYKAMIGRHPTLGFPLVQPAA</sequence>
<keyword id="KW-0067">ATP-binding</keyword>
<keyword id="KW-0997">Cell inner membrane</keyword>
<keyword id="KW-1003">Cell membrane</keyword>
<keyword id="KW-0472">Membrane</keyword>
<keyword id="KW-0547">Nucleotide-binding</keyword>
<keyword id="KW-1278">Translocase</keyword>
<keyword id="KW-0813">Transport</keyword>